<name>DAPB_BACCQ</name>
<reference key="1">
    <citation type="journal article" date="2009" name="J. Bacteriol.">
        <title>Complete genome sequence of the extremophilic Bacillus cereus strain Q1 with industrial applications.</title>
        <authorList>
            <person name="Xiong Z."/>
            <person name="Jiang Y."/>
            <person name="Qi D."/>
            <person name="Lu H."/>
            <person name="Yang F."/>
            <person name="Yang J."/>
            <person name="Chen L."/>
            <person name="Sun L."/>
            <person name="Xu X."/>
            <person name="Xue Y."/>
            <person name="Zhu Y."/>
            <person name="Jin Q."/>
        </authorList>
    </citation>
    <scope>NUCLEOTIDE SEQUENCE [LARGE SCALE GENOMIC DNA]</scope>
    <source>
        <strain>Q1</strain>
    </source>
</reference>
<protein>
    <recommendedName>
        <fullName evidence="1">4-hydroxy-tetrahydrodipicolinate reductase</fullName>
        <shortName evidence="1">HTPA reductase</shortName>
        <ecNumber evidence="1">1.17.1.8</ecNumber>
    </recommendedName>
</protein>
<keyword id="KW-0028">Amino-acid biosynthesis</keyword>
<keyword id="KW-0963">Cytoplasm</keyword>
<keyword id="KW-0220">Diaminopimelate biosynthesis</keyword>
<keyword id="KW-0457">Lysine biosynthesis</keyword>
<keyword id="KW-0520">NAD</keyword>
<keyword id="KW-0521">NADP</keyword>
<keyword id="KW-0560">Oxidoreductase</keyword>
<evidence type="ECO:0000255" key="1">
    <source>
        <dbReference type="HAMAP-Rule" id="MF_00102"/>
    </source>
</evidence>
<evidence type="ECO:0000305" key="2"/>
<accession>B9IVQ5</accession>
<gene>
    <name evidence="1" type="primary">dapB</name>
    <name type="ordered locus">BCQ_1602</name>
</gene>
<organism>
    <name type="scientific">Bacillus cereus (strain Q1)</name>
    <dbReference type="NCBI Taxonomy" id="361100"/>
    <lineage>
        <taxon>Bacteria</taxon>
        <taxon>Bacillati</taxon>
        <taxon>Bacillota</taxon>
        <taxon>Bacilli</taxon>
        <taxon>Bacillales</taxon>
        <taxon>Bacillaceae</taxon>
        <taxon>Bacillus</taxon>
        <taxon>Bacillus cereus group</taxon>
    </lineage>
</organism>
<proteinExistence type="inferred from homology"/>
<sequence length="266" mass="29249">MKEIKVIIAGPRGRMGHEAVLLMERTEHFNLVAAVDYKHGGEKISDLPGMPALDTPIYGDLHTCLEEVEADVLLDLTTPEVGKQHVTLAVERGLRSVIGTTGFTEEELKQLTETAKEKAVGTIIAPNFAIGAVLMMKFSQMAAKYFQDVEVIELHHDQKLDAPSGTAVKTVELIRQNRESKQQGHPNEVEQLEGARGANVDGIHIHSVRLPGLIAHQEVMFGGDGQMLTVRHDSFNRASFMSGVKLSIETVMNLDHLVYGLENIID</sequence>
<comment type="function">
    <text evidence="1">Catalyzes the conversion of 4-hydroxy-tetrahydrodipicolinate (HTPA) to tetrahydrodipicolinate.</text>
</comment>
<comment type="catalytic activity">
    <reaction evidence="1">
        <text>(S)-2,3,4,5-tetrahydrodipicolinate + NAD(+) + H2O = (2S,4S)-4-hydroxy-2,3,4,5-tetrahydrodipicolinate + NADH + H(+)</text>
        <dbReference type="Rhea" id="RHEA:35323"/>
        <dbReference type="ChEBI" id="CHEBI:15377"/>
        <dbReference type="ChEBI" id="CHEBI:15378"/>
        <dbReference type="ChEBI" id="CHEBI:16845"/>
        <dbReference type="ChEBI" id="CHEBI:57540"/>
        <dbReference type="ChEBI" id="CHEBI:57945"/>
        <dbReference type="ChEBI" id="CHEBI:67139"/>
        <dbReference type="EC" id="1.17.1.8"/>
    </reaction>
</comment>
<comment type="catalytic activity">
    <reaction evidence="1">
        <text>(S)-2,3,4,5-tetrahydrodipicolinate + NADP(+) + H2O = (2S,4S)-4-hydroxy-2,3,4,5-tetrahydrodipicolinate + NADPH + H(+)</text>
        <dbReference type="Rhea" id="RHEA:35331"/>
        <dbReference type="ChEBI" id="CHEBI:15377"/>
        <dbReference type="ChEBI" id="CHEBI:15378"/>
        <dbReference type="ChEBI" id="CHEBI:16845"/>
        <dbReference type="ChEBI" id="CHEBI:57783"/>
        <dbReference type="ChEBI" id="CHEBI:58349"/>
        <dbReference type="ChEBI" id="CHEBI:67139"/>
        <dbReference type="EC" id="1.17.1.8"/>
    </reaction>
</comment>
<comment type="pathway">
    <text evidence="1">Amino-acid biosynthesis; L-lysine biosynthesis via DAP pathway; (S)-tetrahydrodipicolinate from L-aspartate: step 4/4.</text>
</comment>
<comment type="subcellular location">
    <subcellularLocation>
        <location evidence="1">Cytoplasm</location>
    </subcellularLocation>
</comment>
<comment type="similarity">
    <text evidence="1">Belongs to the DapB family.</text>
</comment>
<comment type="caution">
    <text evidence="2">Was originally thought to be a dihydrodipicolinate reductase (DHDPR), catalyzing the conversion of dihydrodipicolinate to tetrahydrodipicolinate. However, it was shown in E.coli that the substrate of the enzymatic reaction is not dihydrodipicolinate (DHDP) but in fact (2S,4S)-4-hydroxy-2,3,4,5-tetrahydrodipicolinic acid (HTPA), the product released by the DapA-catalyzed reaction.</text>
</comment>
<feature type="chain" id="PRO_1000118842" description="4-hydroxy-tetrahydrodipicolinate reductase">
    <location>
        <begin position="1"/>
        <end position="266"/>
    </location>
</feature>
<feature type="active site" description="Proton donor/acceptor" evidence="1">
    <location>
        <position position="155"/>
    </location>
</feature>
<feature type="active site" description="Proton donor" evidence="1">
    <location>
        <position position="159"/>
    </location>
</feature>
<feature type="binding site" evidence="1">
    <location>
        <begin position="10"/>
        <end position="15"/>
    </location>
    <ligand>
        <name>NAD(+)</name>
        <dbReference type="ChEBI" id="CHEBI:57540"/>
    </ligand>
</feature>
<feature type="binding site" evidence="1">
    <location>
        <position position="38"/>
    </location>
    <ligand>
        <name>NADP(+)</name>
        <dbReference type="ChEBI" id="CHEBI:58349"/>
    </ligand>
</feature>
<feature type="binding site" evidence="1">
    <location>
        <begin position="99"/>
        <end position="101"/>
    </location>
    <ligand>
        <name>NAD(+)</name>
        <dbReference type="ChEBI" id="CHEBI:57540"/>
    </ligand>
</feature>
<feature type="binding site" evidence="1">
    <location>
        <begin position="125"/>
        <end position="128"/>
    </location>
    <ligand>
        <name>NAD(+)</name>
        <dbReference type="ChEBI" id="CHEBI:57540"/>
    </ligand>
</feature>
<feature type="binding site" evidence="1">
    <location>
        <position position="156"/>
    </location>
    <ligand>
        <name>(S)-2,3,4,5-tetrahydrodipicolinate</name>
        <dbReference type="ChEBI" id="CHEBI:16845"/>
    </ligand>
</feature>
<feature type="binding site" evidence="1">
    <location>
        <begin position="165"/>
        <end position="166"/>
    </location>
    <ligand>
        <name>(S)-2,3,4,5-tetrahydrodipicolinate</name>
        <dbReference type="ChEBI" id="CHEBI:16845"/>
    </ligand>
</feature>
<dbReference type="EC" id="1.17.1.8" evidence="1"/>
<dbReference type="EMBL" id="CP000227">
    <property type="protein sequence ID" value="ACM12030.1"/>
    <property type="molecule type" value="Genomic_DNA"/>
</dbReference>
<dbReference type="SMR" id="B9IVQ5"/>
<dbReference type="KEGG" id="bcq:BCQ_1602"/>
<dbReference type="HOGENOM" id="CLU_047479_0_1_9"/>
<dbReference type="UniPathway" id="UPA00034">
    <property type="reaction ID" value="UER00018"/>
</dbReference>
<dbReference type="Proteomes" id="UP000000441">
    <property type="component" value="Chromosome"/>
</dbReference>
<dbReference type="GO" id="GO:0005829">
    <property type="term" value="C:cytosol"/>
    <property type="evidence" value="ECO:0007669"/>
    <property type="project" value="TreeGrafter"/>
</dbReference>
<dbReference type="GO" id="GO:0008839">
    <property type="term" value="F:4-hydroxy-tetrahydrodipicolinate reductase"/>
    <property type="evidence" value="ECO:0007669"/>
    <property type="project" value="UniProtKB-EC"/>
</dbReference>
<dbReference type="GO" id="GO:0051287">
    <property type="term" value="F:NAD binding"/>
    <property type="evidence" value="ECO:0007669"/>
    <property type="project" value="UniProtKB-UniRule"/>
</dbReference>
<dbReference type="GO" id="GO:0050661">
    <property type="term" value="F:NADP binding"/>
    <property type="evidence" value="ECO:0007669"/>
    <property type="project" value="UniProtKB-UniRule"/>
</dbReference>
<dbReference type="GO" id="GO:0016726">
    <property type="term" value="F:oxidoreductase activity, acting on CH or CH2 groups, NAD or NADP as acceptor"/>
    <property type="evidence" value="ECO:0007669"/>
    <property type="project" value="UniProtKB-UniRule"/>
</dbReference>
<dbReference type="GO" id="GO:0019877">
    <property type="term" value="P:diaminopimelate biosynthetic process"/>
    <property type="evidence" value="ECO:0007669"/>
    <property type="project" value="UniProtKB-UniRule"/>
</dbReference>
<dbReference type="GO" id="GO:0009089">
    <property type="term" value="P:lysine biosynthetic process via diaminopimelate"/>
    <property type="evidence" value="ECO:0007669"/>
    <property type="project" value="UniProtKB-UniRule"/>
</dbReference>
<dbReference type="CDD" id="cd02274">
    <property type="entry name" value="DHDPR_N"/>
    <property type="match status" value="1"/>
</dbReference>
<dbReference type="FunFam" id="3.30.360.10:FF:000009">
    <property type="entry name" value="4-hydroxy-tetrahydrodipicolinate reductase"/>
    <property type="match status" value="1"/>
</dbReference>
<dbReference type="FunFam" id="3.40.50.720:FF:000180">
    <property type="entry name" value="4-hydroxy-tetrahydrodipicolinate reductase"/>
    <property type="match status" value="1"/>
</dbReference>
<dbReference type="Gene3D" id="3.30.360.10">
    <property type="entry name" value="Dihydrodipicolinate Reductase, domain 2"/>
    <property type="match status" value="1"/>
</dbReference>
<dbReference type="Gene3D" id="3.40.50.720">
    <property type="entry name" value="NAD(P)-binding Rossmann-like Domain"/>
    <property type="match status" value="1"/>
</dbReference>
<dbReference type="HAMAP" id="MF_00102">
    <property type="entry name" value="DapB"/>
    <property type="match status" value="1"/>
</dbReference>
<dbReference type="InterPro" id="IPR022663">
    <property type="entry name" value="DapB_C"/>
</dbReference>
<dbReference type="InterPro" id="IPR000846">
    <property type="entry name" value="DapB_N"/>
</dbReference>
<dbReference type="InterPro" id="IPR022664">
    <property type="entry name" value="DapB_N_CS"/>
</dbReference>
<dbReference type="InterPro" id="IPR023940">
    <property type="entry name" value="DHDPR_bac"/>
</dbReference>
<dbReference type="InterPro" id="IPR036291">
    <property type="entry name" value="NAD(P)-bd_dom_sf"/>
</dbReference>
<dbReference type="NCBIfam" id="TIGR00036">
    <property type="entry name" value="dapB"/>
    <property type="match status" value="1"/>
</dbReference>
<dbReference type="PANTHER" id="PTHR20836:SF0">
    <property type="entry name" value="4-HYDROXY-TETRAHYDRODIPICOLINATE REDUCTASE 1, CHLOROPLASTIC-RELATED"/>
    <property type="match status" value="1"/>
</dbReference>
<dbReference type="PANTHER" id="PTHR20836">
    <property type="entry name" value="DIHYDRODIPICOLINATE REDUCTASE"/>
    <property type="match status" value="1"/>
</dbReference>
<dbReference type="Pfam" id="PF05173">
    <property type="entry name" value="DapB_C"/>
    <property type="match status" value="1"/>
</dbReference>
<dbReference type="Pfam" id="PF01113">
    <property type="entry name" value="DapB_N"/>
    <property type="match status" value="1"/>
</dbReference>
<dbReference type="PIRSF" id="PIRSF000161">
    <property type="entry name" value="DHPR"/>
    <property type="match status" value="1"/>
</dbReference>
<dbReference type="SUPFAM" id="SSF55347">
    <property type="entry name" value="Glyceraldehyde-3-phosphate dehydrogenase-like, C-terminal domain"/>
    <property type="match status" value="1"/>
</dbReference>
<dbReference type="SUPFAM" id="SSF51735">
    <property type="entry name" value="NAD(P)-binding Rossmann-fold domains"/>
    <property type="match status" value="1"/>
</dbReference>
<dbReference type="PROSITE" id="PS01298">
    <property type="entry name" value="DAPB"/>
    <property type="match status" value="1"/>
</dbReference>